<comment type="function">
    <text>Core component of nucleosome. Nucleosomes wrap and compact DNA into chromatin, limiting DNA accessibility to the cellular machineries which require DNA as a template. Histones thereby play a central role in transcription regulation, DNA repair, DNA replication and chromosomal stability. DNA accessibility is regulated via a complex set of post-translational modifications of histones, also called histone code, and nucleosome remodeling.</text>
</comment>
<comment type="subunit">
    <text>The nucleosome is a histone octamer containing two molecules each of H2A, H2B, H3 and H4 assembled in one H3-H4 heterotetramer and two H2A-H2B heterodimers. The octamer wraps approximately 147 bp of DNA.</text>
</comment>
<comment type="subcellular location">
    <subcellularLocation>
        <location evidence="1">Nucleus</location>
    </subcellularLocation>
    <subcellularLocation>
        <location evidence="1">Chromosome</location>
    </subcellularLocation>
</comment>
<comment type="similarity">
    <text evidence="4">Belongs to the histone H4 family.</text>
</comment>
<name>H4_PEA</name>
<dbReference type="EMBL" id="U10042">
    <property type="protein sequence ID" value="AAA86948.1"/>
    <property type="molecule type" value="mRNA"/>
</dbReference>
<dbReference type="PIR" id="S60475">
    <property type="entry name" value="HSPM4"/>
</dbReference>
<dbReference type="RefSeq" id="NP_001414681.1">
    <property type="nucleotide sequence ID" value="NM_001427752.1"/>
</dbReference>
<dbReference type="RefSeq" id="XP_050873124.1">
    <property type="nucleotide sequence ID" value="XM_051017167.1"/>
</dbReference>
<dbReference type="RefSeq" id="XP_050873125.1">
    <property type="nucleotide sequence ID" value="XM_051017168.1"/>
</dbReference>
<dbReference type="RefSeq" id="XP_050873126.1">
    <property type="nucleotide sequence ID" value="XM_051017169.1"/>
</dbReference>
<dbReference type="RefSeq" id="XP_050873128.1">
    <property type="nucleotide sequence ID" value="XM_051017171.1"/>
</dbReference>
<dbReference type="RefSeq" id="XP_050879426.1">
    <property type="nucleotide sequence ID" value="XM_051023469.1"/>
</dbReference>
<dbReference type="RefSeq" id="XP_050881072.1">
    <property type="nucleotide sequence ID" value="XM_051025115.1"/>
</dbReference>
<dbReference type="RefSeq" id="XP_050881073.1">
    <property type="nucleotide sequence ID" value="XM_051025116.1"/>
</dbReference>
<dbReference type="RefSeq" id="XP_050881074.1">
    <property type="nucleotide sequence ID" value="XM_051025117.1"/>
</dbReference>
<dbReference type="RefSeq" id="XP_050881075.1">
    <property type="nucleotide sequence ID" value="XM_051025118.1"/>
</dbReference>
<dbReference type="RefSeq" id="XP_050881076.1">
    <property type="nucleotide sequence ID" value="XM_051025119.1"/>
</dbReference>
<dbReference type="RefSeq" id="XP_050881077.1">
    <property type="nucleotide sequence ID" value="XM_051025120.1"/>
</dbReference>
<dbReference type="RefSeq" id="XP_050881104.1">
    <property type="nucleotide sequence ID" value="XM_051025147.1"/>
</dbReference>
<dbReference type="RefSeq" id="XP_050883659.1">
    <property type="nucleotide sequence ID" value="XM_051027702.1"/>
</dbReference>
<dbReference type="RefSeq" id="XP_050883660.1">
    <property type="nucleotide sequence ID" value="XM_051027703.1"/>
</dbReference>
<dbReference type="RefSeq" id="XP_050883661.1">
    <property type="nucleotide sequence ID" value="XM_051027704.1"/>
</dbReference>
<dbReference type="RefSeq" id="XP_050883757.1">
    <property type="nucleotide sequence ID" value="XM_051027800.1"/>
</dbReference>
<dbReference type="RefSeq" id="XP_050887057.1">
    <property type="nucleotide sequence ID" value="XM_051031100.1"/>
</dbReference>
<dbReference type="RefSeq" id="XP_050887058.1">
    <property type="nucleotide sequence ID" value="XM_051031101.1"/>
</dbReference>
<dbReference type="RefSeq" id="XP_050888412.1">
    <property type="nucleotide sequence ID" value="XM_051032455.1"/>
</dbReference>
<dbReference type="RefSeq" id="XP_050893424.1">
    <property type="nucleotide sequence ID" value="XM_051037467.1"/>
</dbReference>
<dbReference type="RefSeq" id="XP_050893425.1">
    <property type="nucleotide sequence ID" value="XM_051037468.1"/>
</dbReference>
<dbReference type="RefSeq" id="XP_050893427.1">
    <property type="nucleotide sequence ID" value="XM_051037470.1"/>
</dbReference>
<dbReference type="RefSeq" id="XP_050899386.1">
    <property type="nucleotide sequence ID" value="XM_051043429.1"/>
</dbReference>
<dbReference type="RefSeq" id="XP_050904998.1">
    <property type="nucleotide sequence ID" value="XM_051049041.1"/>
</dbReference>
<dbReference type="RefSeq" id="XP_050904999.1">
    <property type="nucleotide sequence ID" value="XM_051049042.1"/>
</dbReference>
<dbReference type="RefSeq" id="XP_050910735.1">
    <property type="nucleotide sequence ID" value="XM_051054778.1"/>
</dbReference>
<dbReference type="RefSeq" id="XP_050910737.1">
    <property type="nucleotide sequence ID" value="XM_051054780.1"/>
</dbReference>
<dbReference type="RefSeq" id="XP_050910738.1">
    <property type="nucleotide sequence ID" value="XM_051054781.1"/>
</dbReference>
<dbReference type="RefSeq" id="XP_050910739.1">
    <property type="nucleotide sequence ID" value="XM_051054782.1"/>
</dbReference>
<dbReference type="RefSeq" id="XP_050920993.1">
    <property type="nucleotide sequence ID" value="XM_051065036.1"/>
</dbReference>
<dbReference type="RefSeq" id="XP_050920995.1">
    <property type="nucleotide sequence ID" value="XM_051065038.1"/>
</dbReference>
<dbReference type="RefSeq" id="XP_050920997.1">
    <property type="nucleotide sequence ID" value="XM_051065040.1"/>
</dbReference>
<dbReference type="SMR" id="P62788"/>
<dbReference type="iPTMnet" id="P62788"/>
<dbReference type="GeneID" id="127075707"/>
<dbReference type="GeneID" id="127075708"/>
<dbReference type="GeneID" id="127075709"/>
<dbReference type="GeneID" id="127075710"/>
<dbReference type="GeneID" id="127083210"/>
<dbReference type="GeneID" id="127084626"/>
<dbReference type="GeneID" id="127084627"/>
<dbReference type="GeneID" id="127084628"/>
<dbReference type="GeneID" id="127084629"/>
<dbReference type="GeneID" id="127084631"/>
<dbReference type="GeneID" id="127084632"/>
<dbReference type="GeneID" id="127084654"/>
<dbReference type="GeneID" id="127086881"/>
<dbReference type="GeneID" id="127086882"/>
<dbReference type="GeneID" id="127086883"/>
<dbReference type="GeneID" id="127086974"/>
<dbReference type="GeneID" id="127092249"/>
<dbReference type="GeneID" id="127092253"/>
<dbReference type="GeneID" id="127093513"/>
<dbReference type="GeneID" id="127100338"/>
<dbReference type="GeneID" id="127106140"/>
<dbReference type="GeneID" id="127118787"/>
<dbReference type="GeneID" id="127118788"/>
<dbReference type="GeneID" id="127125921"/>
<dbReference type="GeneID" id="127125922"/>
<dbReference type="GeneID" id="127125923"/>
<dbReference type="GeneID" id="127125924"/>
<dbReference type="GeneID" id="127138564"/>
<dbReference type="GeneID" id="127138567"/>
<dbReference type="GeneID" id="127138568"/>
<dbReference type="GeneID" id="127138569"/>
<dbReference type="OrthoDB" id="1400171at2759"/>
<dbReference type="GO" id="GO:0000786">
    <property type="term" value="C:nucleosome"/>
    <property type="evidence" value="ECO:0007669"/>
    <property type="project" value="UniProtKB-KW"/>
</dbReference>
<dbReference type="GO" id="GO:0005634">
    <property type="term" value="C:nucleus"/>
    <property type="evidence" value="ECO:0007669"/>
    <property type="project" value="UniProtKB-SubCell"/>
</dbReference>
<dbReference type="GO" id="GO:0003677">
    <property type="term" value="F:DNA binding"/>
    <property type="evidence" value="ECO:0007669"/>
    <property type="project" value="UniProtKB-KW"/>
</dbReference>
<dbReference type="GO" id="GO:0046982">
    <property type="term" value="F:protein heterodimerization activity"/>
    <property type="evidence" value="ECO:0007669"/>
    <property type="project" value="InterPro"/>
</dbReference>
<dbReference type="GO" id="GO:0030527">
    <property type="term" value="F:structural constituent of chromatin"/>
    <property type="evidence" value="ECO:0007669"/>
    <property type="project" value="InterPro"/>
</dbReference>
<dbReference type="CDD" id="cd22912">
    <property type="entry name" value="HFD_H4"/>
    <property type="match status" value="1"/>
</dbReference>
<dbReference type="FunFam" id="1.10.20.10:FF:000002">
    <property type="entry name" value="Histone H4"/>
    <property type="match status" value="1"/>
</dbReference>
<dbReference type="Gene3D" id="1.10.20.10">
    <property type="entry name" value="Histone, subunit A"/>
    <property type="match status" value="1"/>
</dbReference>
<dbReference type="InterPro" id="IPR035425">
    <property type="entry name" value="CENP-T/H4_C"/>
</dbReference>
<dbReference type="InterPro" id="IPR009072">
    <property type="entry name" value="Histone-fold"/>
</dbReference>
<dbReference type="InterPro" id="IPR001951">
    <property type="entry name" value="Histone_H4"/>
</dbReference>
<dbReference type="InterPro" id="IPR019809">
    <property type="entry name" value="Histone_H4_CS"/>
</dbReference>
<dbReference type="PANTHER" id="PTHR10484">
    <property type="entry name" value="HISTONE H4"/>
    <property type="match status" value="1"/>
</dbReference>
<dbReference type="Pfam" id="PF15511">
    <property type="entry name" value="CENP-T_C"/>
    <property type="match status" value="1"/>
</dbReference>
<dbReference type="PRINTS" id="PR00623">
    <property type="entry name" value="HISTONEH4"/>
</dbReference>
<dbReference type="SMART" id="SM00417">
    <property type="entry name" value="H4"/>
    <property type="match status" value="1"/>
</dbReference>
<dbReference type="SUPFAM" id="SSF47113">
    <property type="entry name" value="Histone-fold"/>
    <property type="match status" value="1"/>
</dbReference>
<dbReference type="PROSITE" id="PS00047">
    <property type="entry name" value="HISTONE_H4"/>
    <property type="match status" value="1"/>
</dbReference>
<organism>
    <name type="scientific">Pisum sativum</name>
    <name type="common">Garden pea</name>
    <name type="synonym">Lathyrus oleraceus</name>
    <dbReference type="NCBI Taxonomy" id="3888"/>
    <lineage>
        <taxon>Eukaryota</taxon>
        <taxon>Viridiplantae</taxon>
        <taxon>Streptophyta</taxon>
        <taxon>Embryophyta</taxon>
        <taxon>Tracheophyta</taxon>
        <taxon>Spermatophyta</taxon>
        <taxon>Magnoliopsida</taxon>
        <taxon>eudicotyledons</taxon>
        <taxon>Gunneridae</taxon>
        <taxon>Pentapetalae</taxon>
        <taxon>rosids</taxon>
        <taxon>fabids</taxon>
        <taxon>Fabales</taxon>
        <taxon>Fabaceae</taxon>
        <taxon>Papilionoideae</taxon>
        <taxon>50 kb inversion clade</taxon>
        <taxon>NPAAA clade</taxon>
        <taxon>Hologalegina</taxon>
        <taxon>IRL clade</taxon>
        <taxon>Fabeae</taxon>
        <taxon>Pisum</taxon>
    </lineage>
</organism>
<accession>P62788</accession>
<accession>P02308</accession>
<accession>P59258</accession>
<keyword id="KW-0007">Acetylation</keyword>
<keyword id="KW-0158">Chromosome</keyword>
<keyword id="KW-0903">Direct protein sequencing</keyword>
<keyword id="KW-0238">DNA-binding</keyword>
<keyword id="KW-0544">Nucleosome core</keyword>
<keyword id="KW-0539">Nucleus</keyword>
<reference key="1">
    <citation type="journal article" date="1995" name="Plant Mol. Biol.">
        <title>Cell cycle regulation during growth-dormancy cycles in pea axillary buds.</title>
        <authorList>
            <person name="Devitt M.L."/>
            <person name="Stafstrom J.P."/>
        </authorList>
    </citation>
    <scope>NUCLEOTIDE SEQUENCE [MRNA]</scope>
    <source>
        <strain>cv. Alaska</strain>
    </source>
</reference>
<reference key="2">
    <citation type="journal article" date="1969" name="J. Biol. Chem.">
        <title>Calf and pea histone IV. 3. Complete amino acid sequence of pea seedling histone IV; comparison with the homologous calf thymus histone.</title>
        <authorList>
            <person name="Delange R.J."/>
            <person name="Fambrough D.M."/>
            <person name="Smith E.L."/>
            <person name="Bonner J."/>
        </authorList>
    </citation>
    <scope>PROTEIN SEQUENCE OF 2-103</scope>
    <scope>ACETYLATION AT SER-2; LYS-9 AND LYS-17</scope>
    <source>
        <tissue>Seedling</tissue>
    </source>
</reference>
<evidence type="ECO:0000250" key="1"/>
<evidence type="ECO:0000256" key="2">
    <source>
        <dbReference type="SAM" id="MobiDB-lite"/>
    </source>
</evidence>
<evidence type="ECO:0000269" key="3">
    <source>
    </source>
</evidence>
<evidence type="ECO:0000305" key="4"/>
<proteinExistence type="evidence at protein level"/>
<sequence>MSGRGKGGKGLGKGGAKRHRKVLRDNIQGITKPAIRRLARRGGVKRISGLIYEETRGVLKIFLENVIRDAVTYTEHARRKTVTAMDVVYALKRQGRTLYGFGG</sequence>
<protein>
    <recommendedName>
        <fullName>Histone H4</fullName>
    </recommendedName>
</protein>
<feature type="initiator methionine" description="Removed" evidence="3">
    <location>
        <position position="1"/>
    </location>
</feature>
<feature type="chain" id="PRO_0000158342" description="Histone H4">
    <location>
        <begin position="2"/>
        <end position="103"/>
    </location>
</feature>
<feature type="DNA-binding region">
    <location>
        <begin position="17"/>
        <end position="21"/>
    </location>
</feature>
<feature type="region of interest" description="Disordered" evidence="2">
    <location>
        <begin position="1"/>
        <end position="20"/>
    </location>
</feature>
<feature type="compositionally biased region" description="Gly residues" evidence="2">
    <location>
        <begin position="1"/>
        <end position="14"/>
    </location>
</feature>
<feature type="modified residue" description="N-acetylserine" evidence="3">
    <location>
        <position position="2"/>
    </location>
</feature>
<feature type="modified residue" description="N6-acetyllysine" evidence="3">
    <location>
        <position position="9"/>
    </location>
</feature>
<feature type="modified residue" description="N6-acetyllysine" evidence="3">
    <location>
        <position position="17"/>
    </location>
</feature>